<feature type="chain" id="PRO_1000055868" description="Large ribosomal subunit protein bL17">
    <location>
        <begin position="1"/>
        <end position="132"/>
    </location>
</feature>
<accession>A1TYM3</accession>
<sequence length="132" mass="15042">MRHRKSGRKFNRTSAHRKAMFRNMTASLVEHELIKTTLPKAKELRRVAEPLITLAKNDSVANRRLAFSRLRSDAAVAKLFDELGPRYSERPGGYLRILKCGFRAGDNAPMAFVELVGRPLDIEAEEMDDDEE</sequence>
<keyword id="KW-0687">Ribonucleoprotein</keyword>
<keyword id="KW-0689">Ribosomal protein</keyword>
<organism>
    <name type="scientific">Marinobacter nauticus (strain ATCC 700491 / DSM 11845 / VT8)</name>
    <name type="common">Marinobacter aquaeolei</name>
    <dbReference type="NCBI Taxonomy" id="351348"/>
    <lineage>
        <taxon>Bacteria</taxon>
        <taxon>Pseudomonadati</taxon>
        <taxon>Pseudomonadota</taxon>
        <taxon>Gammaproteobacteria</taxon>
        <taxon>Pseudomonadales</taxon>
        <taxon>Marinobacteraceae</taxon>
        <taxon>Marinobacter</taxon>
    </lineage>
</organism>
<dbReference type="EMBL" id="CP000514">
    <property type="protein sequence ID" value="ABM17842.1"/>
    <property type="molecule type" value="Genomic_DNA"/>
</dbReference>
<dbReference type="RefSeq" id="WP_011784264.1">
    <property type="nucleotide sequence ID" value="NC_008740.1"/>
</dbReference>
<dbReference type="SMR" id="A1TYM3"/>
<dbReference type="STRING" id="351348.Maqu_0745"/>
<dbReference type="KEGG" id="maq:Maqu_0745"/>
<dbReference type="eggNOG" id="COG0203">
    <property type="taxonomic scope" value="Bacteria"/>
</dbReference>
<dbReference type="HOGENOM" id="CLU_074407_2_0_6"/>
<dbReference type="OrthoDB" id="9809073at2"/>
<dbReference type="Proteomes" id="UP000000998">
    <property type="component" value="Chromosome"/>
</dbReference>
<dbReference type="GO" id="GO:0022625">
    <property type="term" value="C:cytosolic large ribosomal subunit"/>
    <property type="evidence" value="ECO:0007669"/>
    <property type="project" value="TreeGrafter"/>
</dbReference>
<dbReference type="GO" id="GO:0003735">
    <property type="term" value="F:structural constituent of ribosome"/>
    <property type="evidence" value="ECO:0007669"/>
    <property type="project" value="InterPro"/>
</dbReference>
<dbReference type="GO" id="GO:0006412">
    <property type="term" value="P:translation"/>
    <property type="evidence" value="ECO:0007669"/>
    <property type="project" value="UniProtKB-UniRule"/>
</dbReference>
<dbReference type="FunFam" id="3.90.1030.10:FF:000001">
    <property type="entry name" value="50S ribosomal protein L17"/>
    <property type="match status" value="1"/>
</dbReference>
<dbReference type="Gene3D" id="3.90.1030.10">
    <property type="entry name" value="Ribosomal protein L17"/>
    <property type="match status" value="1"/>
</dbReference>
<dbReference type="HAMAP" id="MF_01368">
    <property type="entry name" value="Ribosomal_bL17"/>
    <property type="match status" value="1"/>
</dbReference>
<dbReference type="InterPro" id="IPR000456">
    <property type="entry name" value="Ribosomal_bL17"/>
</dbReference>
<dbReference type="InterPro" id="IPR047859">
    <property type="entry name" value="Ribosomal_bL17_CS"/>
</dbReference>
<dbReference type="InterPro" id="IPR036373">
    <property type="entry name" value="Ribosomal_bL17_sf"/>
</dbReference>
<dbReference type="NCBIfam" id="TIGR00059">
    <property type="entry name" value="L17"/>
    <property type="match status" value="1"/>
</dbReference>
<dbReference type="PANTHER" id="PTHR14413:SF16">
    <property type="entry name" value="LARGE RIBOSOMAL SUBUNIT PROTEIN BL17M"/>
    <property type="match status" value="1"/>
</dbReference>
<dbReference type="PANTHER" id="PTHR14413">
    <property type="entry name" value="RIBOSOMAL PROTEIN L17"/>
    <property type="match status" value="1"/>
</dbReference>
<dbReference type="Pfam" id="PF01196">
    <property type="entry name" value="Ribosomal_L17"/>
    <property type="match status" value="1"/>
</dbReference>
<dbReference type="SUPFAM" id="SSF64263">
    <property type="entry name" value="Prokaryotic ribosomal protein L17"/>
    <property type="match status" value="1"/>
</dbReference>
<dbReference type="PROSITE" id="PS01167">
    <property type="entry name" value="RIBOSOMAL_L17"/>
    <property type="match status" value="1"/>
</dbReference>
<gene>
    <name evidence="1" type="primary">rplQ</name>
    <name type="ordered locus">Maqu_0745</name>
</gene>
<evidence type="ECO:0000255" key="1">
    <source>
        <dbReference type="HAMAP-Rule" id="MF_01368"/>
    </source>
</evidence>
<evidence type="ECO:0000305" key="2"/>
<protein>
    <recommendedName>
        <fullName evidence="1">Large ribosomal subunit protein bL17</fullName>
    </recommendedName>
    <alternativeName>
        <fullName evidence="2">50S ribosomal protein L17</fullName>
    </alternativeName>
</protein>
<proteinExistence type="inferred from homology"/>
<comment type="subunit">
    <text evidence="1">Part of the 50S ribosomal subunit. Contacts protein L32.</text>
</comment>
<comment type="similarity">
    <text evidence="1">Belongs to the bacterial ribosomal protein bL17 family.</text>
</comment>
<name>RL17_MARN8</name>
<reference key="1">
    <citation type="journal article" date="2011" name="Appl. Environ. Microbiol.">
        <title>Genomic potential of Marinobacter aquaeolei, a biogeochemical 'opportunitroph'.</title>
        <authorList>
            <person name="Singer E."/>
            <person name="Webb E.A."/>
            <person name="Nelson W.C."/>
            <person name="Heidelberg J.F."/>
            <person name="Ivanova N."/>
            <person name="Pati A."/>
            <person name="Edwards K.J."/>
        </authorList>
    </citation>
    <scope>NUCLEOTIDE SEQUENCE [LARGE SCALE GENOMIC DNA]</scope>
    <source>
        <strain>ATCC 700491 / DSM 11845 / VT8</strain>
    </source>
</reference>